<evidence type="ECO:0000250" key="1"/>
<evidence type="ECO:0000250" key="2">
    <source>
        <dbReference type="UniProtKB" id="P52732"/>
    </source>
</evidence>
<evidence type="ECO:0000255" key="3"/>
<evidence type="ECO:0000255" key="4">
    <source>
        <dbReference type="PROSITE-ProRule" id="PRU00283"/>
    </source>
</evidence>
<evidence type="ECO:0000256" key="5">
    <source>
        <dbReference type="SAM" id="MobiDB-lite"/>
    </source>
</evidence>
<evidence type="ECO:0000305" key="6"/>
<comment type="function">
    <text evidence="2">Motor protein required for establishing a bipolar spindle during mitosis. Required in non-mitotic cells for transport of secretory proteins from the Golgi complex to the cell surface.</text>
</comment>
<comment type="subunit">
    <text evidence="2">Interacts with the thyroid hormone receptor in the presence of thyroid hormone. Component of a large chromatin remodeling complex, at least composed of MYSM1, PCAF, RBM10 and KIF11/TRIP5. Interacts with RARRES1 and AGBL2 (By similarity).</text>
</comment>
<comment type="subcellular location">
    <subcellularLocation>
        <location evidence="2">Cytoplasm</location>
    </subcellularLocation>
    <subcellularLocation>
        <location evidence="2">Cytoplasm</location>
        <location evidence="2">Cytoskeleton</location>
        <location evidence="2">Spindle pole</location>
    </subcellularLocation>
</comment>
<comment type="PTM">
    <text evidence="2">Phosphorylated exclusively on serine during S phase, but on both serine and Thr-925 during mitosis, so controlling the association of KIF11 with the spindle apparatus (probably during early prophase).</text>
</comment>
<comment type="similarity">
    <text evidence="4">Belongs to the TRAFAC class myosin-kinesin ATPase superfamily. Kinesin family. BimC subfamily.</text>
</comment>
<feature type="chain" id="PRO_0000253343" description="Kinesin-like protein KIF11" evidence="1">
    <location>
        <begin position="1"/>
        <end position="1052"/>
    </location>
</feature>
<feature type="domain" description="Kinesin motor" evidence="4">
    <location>
        <begin position="17"/>
        <end position="358"/>
    </location>
</feature>
<feature type="region of interest" description="Disordered" evidence="5">
    <location>
        <begin position="950"/>
        <end position="1026"/>
    </location>
</feature>
<feature type="region of interest" description="Disordered" evidence="5">
    <location>
        <begin position="1033"/>
        <end position="1052"/>
    </location>
</feature>
<feature type="coiled-coil region" evidence="3">
    <location>
        <begin position="364"/>
        <end position="478"/>
    </location>
</feature>
<feature type="coiled-coil region" evidence="3">
    <location>
        <begin position="963"/>
        <end position="988"/>
    </location>
</feature>
<feature type="compositionally biased region" description="Basic and acidic residues" evidence="5">
    <location>
        <begin position="1016"/>
        <end position="1026"/>
    </location>
</feature>
<feature type="binding site" evidence="4">
    <location>
        <begin position="104"/>
        <end position="111"/>
    </location>
    <ligand>
        <name>ATP</name>
        <dbReference type="ChEBI" id="CHEBI:30616"/>
    </ligand>
</feature>
<feature type="modified residue" description="N6-acetyllysine" evidence="2">
    <location>
        <position position="145"/>
    </location>
</feature>
<feature type="modified residue" description="Phosphothreonine" evidence="2">
    <location>
        <position position="457"/>
    </location>
</feature>
<feature type="modified residue" description="Phosphothreonine" evidence="2">
    <location>
        <position position="925"/>
    </location>
</feature>
<feature type="cross-link" description="Glycyl lysine isopeptide (Lys-Gly) (interchain with G-Cter in SUMO2)" evidence="2">
    <location>
        <position position="476"/>
    </location>
</feature>
<feature type="sequence conflict" description="In Ref. 2; CAA11228." evidence="6" ref="2">
    <original>E</original>
    <variation>D</variation>
    <location>
        <position position="152"/>
    </location>
</feature>
<feature type="sequence conflict" description="In Ref. 2; CAA11228." evidence="6" ref="2">
    <original>ET</original>
    <variation>Q</variation>
    <location>
        <begin position="246"/>
        <end position="247"/>
    </location>
</feature>
<feature type="sequence conflict" description="In Ref. 2; CAA11228." evidence="6" ref="2">
    <original>S</original>
    <variation>C</variation>
    <location>
        <position position="572"/>
    </location>
</feature>
<feature type="sequence conflict" description="In Ref. 2; CAA11228." evidence="6" ref="2">
    <original>L</original>
    <variation>R</variation>
    <location>
        <position position="755"/>
    </location>
</feature>
<feature type="sequence conflict" description="In Ref. 2; CAA11228." evidence="6" ref="2">
    <original>A</original>
    <variation>R</variation>
    <location>
        <position position="871"/>
    </location>
</feature>
<feature type="sequence conflict" description="In Ref. 2; CAA11228." evidence="6" ref="2">
    <original>H</original>
    <variation>L</variation>
    <location>
        <position position="994"/>
    </location>
</feature>
<dbReference type="EMBL" id="BC060670">
    <property type="protein sequence ID" value="AAH60670.1"/>
    <property type="molecule type" value="mRNA"/>
</dbReference>
<dbReference type="EMBL" id="AJ223293">
    <property type="protein sequence ID" value="CAA11228.1"/>
    <property type="molecule type" value="mRNA"/>
</dbReference>
<dbReference type="CCDS" id="CCDS29777.1"/>
<dbReference type="RefSeq" id="NP_034745.1">
    <property type="nucleotide sequence ID" value="NM_010615.2"/>
</dbReference>
<dbReference type="SMR" id="Q6P9P6"/>
<dbReference type="BioGRID" id="200928">
    <property type="interactions" value="11"/>
</dbReference>
<dbReference type="DIP" id="DIP-62086N"/>
<dbReference type="FunCoup" id="Q6P9P6">
    <property type="interactions" value="1854"/>
</dbReference>
<dbReference type="IntAct" id="Q6P9P6">
    <property type="interactions" value="2"/>
</dbReference>
<dbReference type="STRING" id="10090.ENSMUSP00000012587"/>
<dbReference type="GlyGen" id="Q6P9P6">
    <property type="glycosylation" value="1 site, 1 O-linked glycan (1 site)"/>
</dbReference>
<dbReference type="iPTMnet" id="Q6P9P6"/>
<dbReference type="PhosphoSitePlus" id="Q6P9P6"/>
<dbReference type="SwissPalm" id="Q6P9P6"/>
<dbReference type="jPOST" id="Q6P9P6"/>
<dbReference type="PaxDb" id="10090-ENSMUSP00000012587"/>
<dbReference type="PeptideAtlas" id="Q6P9P6"/>
<dbReference type="ProteomicsDB" id="263528"/>
<dbReference type="Pumba" id="Q6P9P6"/>
<dbReference type="Antibodypedia" id="1871">
    <property type="antibodies" value="464 antibodies from 40 providers"/>
</dbReference>
<dbReference type="DNASU" id="16551"/>
<dbReference type="Ensembl" id="ENSMUST00000012587.4">
    <property type="protein sequence ID" value="ENSMUSP00000012587.4"/>
    <property type="gene ID" value="ENSMUSG00000012443.5"/>
</dbReference>
<dbReference type="GeneID" id="16551"/>
<dbReference type="KEGG" id="mmu:16551"/>
<dbReference type="UCSC" id="uc008hin.1">
    <property type="organism name" value="mouse"/>
</dbReference>
<dbReference type="AGR" id="MGI:1098231"/>
<dbReference type="CTD" id="3832"/>
<dbReference type="MGI" id="MGI:1098231">
    <property type="gene designation" value="Kif11"/>
</dbReference>
<dbReference type="VEuPathDB" id="HostDB:ENSMUSG00000012443"/>
<dbReference type="eggNOG" id="KOG0243">
    <property type="taxonomic scope" value="Eukaryota"/>
</dbReference>
<dbReference type="GeneTree" id="ENSGT00940000155921"/>
<dbReference type="HOGENOM" id="CLU_001485_33_4_1"/>
<dbReference type="InParanoid" id="Q6P9P6"/>
<dbReference type="OMA" id="CQLISLW"/>
<dbReference type="OrthoDB" id="3176171at2759"/>
<dbReference type="PhylomeDB" id="Q6P9P6"/>
<dbReference type="TreeFam" id="TF105230"/>
<dbReference type="Reactome" id="R-MMU-2132295">
    <property type="pathway name" value="MHC class II antigen presentation"/>
</dbReference>
<dbReference type="Reactome" id="R-MMU-6811434">
    <property type="pathway name" value="COPI-dependent Golgi-to-ER retrograde traffic"/>
</dbReference>
<dbReference type="Reactome" id="R-MMU-983189">
    <property type="pathway name" value="Kinesins"/>
</dbReference>
<dbReference type="BioGRID-ORCS" id="16551">
    <property type="hits" value="23 hits in 79 CRISPR screens"/>
</dbReference>
<dbReference type="ChiTaRS" id="Kif11">
    <property type="organism name" value="mouse"/>
</dbReference>
<dbReference type="PRO" id="PR:Q6P9P6"/>
<dbReference type="Proteomes" id="UP000000589">
    <property type="component" value="Chromosome 19"/>
</dbReference>
<dbReference type="RNAct" id="Q6P9P6">
    <property type="molecule type" value="protein"/>
</dbReference>
<dbReference type="Bgee" id="ENSMUSG00000012443">
    <property type="expression patterns" value="Expressed in embryonic post-anal tail and 124 other cell types or tissues"/>
</dbReference>
<dbReference type="GO" id="GO:0036064">
    <property type="term" value="C:ciliary basal body"/>
    <property type="evidence" value="ECO:0007669"/>
    <property type="project" value="Ensembl"/>
</dbReference>
<dbReference type="GO" id="GO:0005829">
    <property type="term" value="C:cytosol"/>
    <property type="evidence" value="ECO:0007669"/>
    <property type="project" value="Ensembl"/>
</dbReference>
<dbReference type="GO" id="GO:0043231">
    <property type="term" value="C:intracellular membrane-bounded organelle"/>
    <property type="evidence" value="ECO:0007669"/>
    <property type="project" value="Ensembl"/>
</dbReference>
<dbReference type="GO" id="GO:0072686">
    <property type="term" value="C:mitotic spindle"/>
    <property type="evidence" value="ECO:0007669"/>
    <property type="project" value="Ensembl"/>
</dbReference>
<dbReference type="GO" id="GO:0032991">
    <property type="term" value="C:protein-containing complex"/>
    <property type="evidence" value="ECO:0007669"/>
    <property type="project" value="Ensembl"/>
</dbReference>
<dbReference type="GO" id="GO:0005819">
    <property type="term" value="C:spindle"/>
    <property type="evidence" value="ECO:0000250"/>
    <property type="project" value="UniProtKB"/>
</dbReference>
<dbReference type="GO" id="GO:0005876">
    <property type="term" value="C:spindle microtubule"/>
    <property type="evidence" value="ECO:0007669"/>
    <property type="project" value="Ensembl"/>
</dbReference>
<dbReference type="GO" id="GO:0000922">
    <property type="term" value="C:spindle pole"/>
    <property type="evidence" value="ECO:0007669"/>
    <property type="project" value="UniProtKB-SubCell"/>
</dbReference>
<dbReference type="GO" id="GO:0005524">
    <property type="term" value="F:ATP binding"/>
    <property type="evidence" value="ECO:0007669"/>
    <property type="project" value="UniProtKB-KW"/>
</dbReference>
<dbReference type="GO" id="GO:0008017">
    <property type="term" value="F:microtubule binding"/>
    <property type="evidence" value="ECO:0007669"/>
    <property type="project" value="InterPro"/>
</dbReference>
<dbReference type="GO" id="GO:0003777">
    <property type="term" value="F:microtubule motor activity"/>
    <property type="evidence" value="ECO:0007669"/>
    <property type="project" value="InterPro"/>
</dbReference>
<dbReference type="GO" id="GO:0019901">
    <property type="term" value="F:protein kinase binding"/>
    <property type="evidence" value="ECO:0000250"/>
    <property type="project" value="UniProtKB"/>
</dbReference>
<dbReference type="GO" id="GO:0051301">
    <property type="term" value="P:cell division"/>
    <property type="evidence" value="ECO:0007669"/>
    <property type="project" value="UniProtKB-KW"/>
</dbReference>
<dbReference type="GO" id="GO:0007018">
    <property type="term" value="P:microtubule-based movement"/>
    <property type="evidence" value="ECO:0007669"/>
    <property type="project" value="InterPro"/>
</dbReference>
<dbReference type="GO" id="GO:0007100">
    <property type="term" value="P:mitotic centrosome separation"/>
    <property type="evidence" value="ECO:0000315"/>
    <property type="project" value="MGI"/>
</dbReference>
<dbReference type="GO" id="GO:0090307">
    <property type="term" value="P:mitotic spindle assembly"/>
    <property type="evidence" value="ECO:0000250"/>
    <property type="project" value="UniProtKB"/>
</dbReference>
<dbReference type="GO" id="GO:0046602">
    <property type="term" value="P:regulation of mitotic centrosome separation"/>
    <property type="evidence" value="ECO:0000250"/>
    <property type="project" value="UniProtKB"/>
</dbReference>
<dbReference type="GO" id="GO:0051225">
    <property type="term" value="P:spindle assembly"/>
    <property type="evidence" value="ECO:0000315"/>
    <property type="project" value="MGI"/>
</dbReference>
<dbReference type="CDD" id="cd01364">
    <property type="entry name" value="KISc_BimC_Eg5"/>
    <property type="match status" value="1"/>
</dbReference>
<dbReference type="FunFam" id="3.40.850.10:FF:000035">
    <property type="entry name" value="Kinesin-like protein KIF11"/>
    <property type="match status" value="1"/>
</dbReference>
<dbReference type="Gene3D" id="3.40.850.10">
    <property type="entry name" value="Kinesin motor domain"/>
    <property type="match status" value="1"/>
</dbReference>
<dbReference type="InterPro" id="IPR047149">
    <property type="entry name" value="KIF11-like"/>
</dbReference>
<dbReference type="InterPro" id="IPR047241">
    <property type="entry name" value="KIF11-like_kin_motor_dom"/>
</dbReference>
<dbReference type="InterPro" id="IPR025901">
    <property type="entry name" value="Kinesin-assoc_MT-bd_dom"/>
</dbReference>
<dbReference type="InterPro" id="IPR019821">
    <property type="entry name" value="Kinesin_motor_CS"/>
</dbReference>
<dbReference type="InterPro" id="IPR001752">
    <property type="entry name" value="Kinesin_motor_dom"/>
</dbReference>
<dbReference type="InterPro" id="IPR036961">
    <property type="entry name" value="Kinesin_motor_dom_sf"/>
</dbReference>
<dbReference type="InterPro" id="IPR027417">
    <property type="entry name" value="P-loop_NTPase"/>
</dbReference>
<dbReference type="PANTHER" id="PTHR47970">
    <property type="entry name" value="KINESIN-LIKE PROTEIN KIF11"/>
    <property type="match status" value="1"/>
</dbReference>
<dbReference type="PANTHER" id="PTHR47970:SF26">
    <property type="entry name" value="KINESIN-LIKE PROTEIN KIF11"/>
    <property type="match status" value="1"/>
</dbReference>
<dbReference type="Pfam" id="PF00225">
    <property type="entry name" value="Kinesin"/>
    <property type="match status" value="1"/>
</dbReference>
<dbReference type="Pfam" id="PF13931">
    <property type="entry name" value="Microtub_bind"/>
    <property type="match status" value="1"/>
</dbReference>
<dbReference type="PRINTS" id="PR00380">
    <property type="entry name" value="KINESINHEAVY"/>
</dbReference>
<dbReference type="SMART" id="SM00129">
    <property type="entry name" value="KISc"/>
    <property type="match status" value="1"/>
</dbReference>
<dbReference type="SUPFAM" id="SSF52540">
    <property type="entry name" value="P-loop containing nucleoside triphosphate hydrolases"/>
    <property type="match status" value="1"/>
</dbReference>
<dbReference type="PROSITE" id="PS00411">
    <property type="entry name" value="KINESIN_MOTOR_1"/>
    <property type="match status" value="1"/>
</dbReference>
<dbReference type="PROSITE" id="PS50067">
    <property type="entry name" value="KINESIN_MOTOR_2"/>
    <property type="match status" value="1"/>
</dbReference>
<gene>
    <name type="primary">Kif11</name>
</gene>
<sequence>MASQPSSLKKKEEKGRNIQVVVRCRPFNLAERKANAHSVVECDHARKEVSVRTAGLTDKTSKKTYTFDMVFGASTKQIDVYRSVVCPILDEVIMGYNCTIFAYGQTGTGKTFTMEGERSPNEVYTWEEDPLAGIIPRTLHQIFEKLTDNGTEFSVKVSLLEIYNEELFDLLSPSSDVSERLQMFDDPRNKRGVIIKGLEEITVHNKDEVYQILEKGAAKRTTAATLMNAYSSRSHSVFSVTIHMKETTIDGEELVKIGKLNLVDLAGSENIGRSGAVDKRAREAGNINQSLLTLGRVITALVERTPHIPYRESKLTRILQDSLGGRTRTSIIATISPASFNLEETLSTLEYAHRAKNIMNKPEVNQKLTKKALIKEYTEEIERLKRDLAAAREKNGVYISEESFRAMNGKVTVQEEQIVELVEKIAVLEEELSKATELFMDSKNELDQCKSDLQTKTQELETTQKHLQETKLQLVKEEYVSSALERTEKTLHDTASKLLNTVKETTRAVSGLHSKLDRKRAIDEHNAEAQESFGKNLNSLFNNMEELIKDGSAKQKAMLDVHKTLFGNLMSSSVSALDTITTTALESLVSIPENVSARVSQISDMILEEQSLAAQSKSVLQGLIDELVTDLFTSLKTIVAPSVVSILNINKQLQHIFRASSTVAEKVEDQKREIDSFLSILCNNLHELRENTVSSLVESQKLCGDLTEDLKTIKETHSQELCQLSSSWAERFCALEKKYENIQKPLNSIQENTELRSTDIINKTTVHSKKILAESDGLLQELRHFNQEGTQLVEESVGHCSSLNSNLETVSQEITQKCGTLNTSTVHFSDQWASCLSKRKEELENLMEFVNGCCKASSSEITKKVREQSAAVANQHSSFVAQMTSDEESCKAGSLELDKTIKTGLTKLNCFLKQDLKLDIPTGMTPERKKYLYPTTLVRTEPREQLLDQLQKKQPPMMLNSSEASKETSQDMDEEREALEQCTEELVSPETTEHPSADCSSSRGLPFFQRKKPHGKDKENRGLNPVEKYKVEEASDLSISKSRLPLHTSINL</sequence>
<organism>
    <name type="scientific">Mus musculus</name>
    <name type="common">Mouse</name>
    <dbReference type="NCBI Taxonomy" id="10090"/>
    <lineage>
        <taxon>Eukaryota</taxon>
        <taxon>Metazoa</taxon>
        <taxon>Chordata</taxon>
        <taxon>Craniata</taxon>
        <taxon>Vertebrata</taxon>
        <taxon>Euteleostomi</taxon>
        <taxon>Mammalia</taxon>
        <taxon>Eutheria</taxon>
        <taxon>Euarchontoglires</taxon>
        <taxon>Glires</taxon>
        <taxon>Rodentia</taxon>
        <taxon>Myomorpha</taxon>
        <taxon>Muroidea</taxon>
        <taxon>Muridae</taxon>
        <taxon>Murinae</taxon>
        <taxon>Mus</taxon>
        <taxon>Mus</taxon>
    </lineage>
</organism>
<protein>
    <recommendedName>
        <fullName>Kinesin-like protein KIF11</fullName>
    </recommendedName>
    <alternativeName>
        <fullName>Kinesin-related motor protein Eg5</fullName>
    </alternativeName>
</protein>
<name>KIF11_MOUSE</name>
<reference key="1">
    <citation type="journal article" date="2004" name="Genome Res.">
        <title>The status, quality, and expansion of the NIH full-length cDNA project: the Mammalian Gene Collection (MGC).</title>
        <authorList>
            <consortium name="The MGC Project Team"/>
        </authorList>
    </citation>
    <scope>NUCLEOTIDE SEQUENCE [LARGE SCALE MRNA]</scope>
    <source>
        <strain>C57BL/6J</strain>
        <tissue>Brain</tissue>
    </source>
</reference>
<reference key="2">
    <citation type="journal article" date="1998" name="J. Neurocytol.">
        <title>The nuclear/mitotic apparatus protein NuMA is a component of the somatodendritic microtubule arrays of the neuron.</title>
        <authorList>
            <person name="Ferhat L."/>
            <person name="Cook C."/>
            <person name="Kuriyama R."/>
            <person name="Baas P.W."/>
        </authorList>
    </citation>
    <scope>NUCLEOTIDE SEQUENCE [MRNA] OF 38-1052</scope>
</reference>
<reference key="3">
    <citation type="journal article" date="2010" name="Cell">
        <title>A tissue-specific atlas of mouse protein phosphorylation and expression.</title>
        <authorList>
            <person name="Huttlin E.L."/>
            <person name="Jedrychowski M.P."/>
            <person name="Elias J.E."/>
            <person name="Goswami T."/>
            <person name="Rad R."/>
            <person name="Beausoleil S.A."/>
            <person name="Villen J."/>
            <person name="Haas W."/>
            <person name="Sowa M.E."/>
            <person name="Gygi S.P."/>
        </authorList>
    </citation>
    <scope>IDENTIFICATION BY MASS SPECTROMETRY [LARGE SCALE ANALYSIS]</scope>
    <source>
        <tissue>Spleen</tissue>
        <tissue>Testis</tissue>
    </source>
</reference>
<keyword id="KW-0007">Acetylation</keyword>
<keyword id="KW-0067">ATP-binding</keyword>
<keyword id="KW-0131">Cell cycle</keyword>
<keyword id="KW-0132">Cell division</keyword>
<keyword id="KW-0175">Coiled coil</keyword>
<keyword id="KW-0963">Cytoplasm</keyword>
<keyword id="KW-0206">Cytoskeleton</keyword>
<keyword id="KW-1017">Isopeptide bond</keyword>
<keyword id="KW-0493">Microtubule</keyword>
<keyword id="KW-0498">Mitosis</keyword>
<keyword id="KW-0505">Motor protein</keyword>
<keyword id="KW-0547">Nucleotide-binding</keyword>
<keyword id="KW-0597">Phosphoprotein</keyword>
<keyword id="KW-1185">Reference proteome</keyword>
<keyword id="KW-0832">Ubl conjugation</keyword>
<accession>Q6P9P6</accession>
<accession>Q9Z1J0</accession>
<proteinExistence type="evidence at protein level"/>